<comment type="function">
    <text evidence="1">Catalyzes the removal of a penultimate prolyl residue from the N-termini of peptides.</text>
</comment>
<comment type="catalytic activity">
    <reaction>
        <text>Release of any N-terminal amino acid, including proline, that is linked to proline, even from a dipeptide or tripeptide.</text>
        <dbReference type="EC" id="3.4.11.9"/>
    </reaction>
</comment>
<comment type="cofactor">
    <cofactor evidence="1">
        <name>Mn(2+)</name>
        <dbReference type="ChEBI" id="CHEBI:29035"/>
    </cofactor>
    <text evidence="1">Binds 2 manganese ions per subunit.</text>
</comment>
<comment type="similarity">
    <text evidence="2">Belongs to the peptidase M24B family.</text>
</comment>
<dbReference type="EC" id="3.4.11.9"/>
<dbReference type="EMBL" id="KN305546">
    <property type="protein sequence ID" value="EEH17143.1"/>
    <property type="molecule type" value="Genomic_DNA"/>
</dbReference>
<dbReference type="SMR" id="C0SHQ0"/>
<dbReference type="VEuPathDB" id="FungiDB:PABG_07230"/>
<dbReference type="HOGENOM" id="CLU_017266_1_2_1"/>
<dbReference type="OrthoDB" id="9302at33183"/>
<dbReference type="GO" id="GO:0030145">
    <property type="term" value="F:manganese ion binding"/>
    <property type="evidence" value="ECO:0007669"/>
    <property type="project" value="InterPro"/>
</dbReference>
<dbReference type="GO" id="GO:0070006">
    <property type="term" value="F:metalloaminopeptidase activity"/>
    <property type="evidence" value="ECO:0007669"/>
    <property type="project" value="InterPro"/>
</dbReference>
<dbReference type="GO" id="GO:0006508">
    <property type="term" value="P:proteolysis"/>
    <property type="evidence" value="ECO:0007669"/>
    <property type="project" value="UniProtKB-KW"/>
</dbReference>
<dbReference type="CDD" id="cd01087">
    <property type="entry name" value="Prolidase"/>
    <property type="match status" value="1"/>
</dbReference>
<dbReference type="FunFam" id="3.90.230.10:FF:000002">
    <property type="entry name" value="Xaa-Pro aminopeptidase 3"/>
    <property type="match status" value="1"/>
</dbReference>
<dbReference type="Gene3D" id="3.90.230.10">
    <property type="entry name" value="Creatinase/methionine aminopeptidase superfamily"/>
    <property type="match status" value="1"/>
</dbReference>
<dbReference type="Gene3D" id="3.40.350.10">
    <property type="entry name" value="Creatinase/prolidase N-terminal domain"/>
    <property type="match status" value="1"/>
</dbReference>
<dbReference type="InterPro" id="IPR007865">
    <property type="entry name" value="Aminopep_P_N"/>
</dbReference>
<dbReference type="InterPro" id="IPR029149">
    <property type="entry name" value="Creatin/AminoP/Spt16_N"/>
</dbReference>
<dbReference type="InterPro" id="IPR036005">
    <property type="entry name" value="Creatinase/aminopeptidase-like"/>
</dbReference>
<dbReference type="InterPro" id="IPR000994">
    <property type="entry name" value="Pept_M24"/>
</dbReference>
<dbReference type="InterPro" id="IPR052433">
    <property type="entry name" value="X-Pro_dipept-like"/>
</dbReference>
<dbReference type="PANTHER" id="PTHR43226">
    <property type="entry name" value="XAA-PRO AMINOPEPTIDASE 3"/>
    <property type="match status" value="1"/>
</dbReference>
<dbReference type="PANTHER" id="PTHR43226:SF1">
    <property type="entry name" value="XAA-PRO DIPEPTIDASE"/>
    <property type="match status" value="1"/>
</dbReference>
<dbReference type="Pfam" id="PF05195">
    <property type="entry name" value="AMP_N"/>
    <property type="match status" value="1"/>
</dbReference>
<dbReference type="Pfam" id="PF00557">
    <property type="entry name" value="Peptidase_M24"/>
    <property type="match status" value="1"/>
</dbReference>
<dbReference type="SMART" id="SM01011">
    <property type="entry name" value="AMP_N"/>
    <property type="match status" value="1"/>
</dbReference>
<dbReference type="SUPFAM" id="SSF55920">
    <property type="entry name" value="Creatinase/aminopeptidase"/>
    <property type="match status" value="1"/>
</dbReference>
<dbReference type="SUPFAM" id="SSF53092">
    <property type="entry name" value="Creatinase/prolidase N-terminal domain"/>
    <property type="match status" value="1"/>
</dbReference>
<accession>C0SHQ0</accession>
<gene>
    <name type="primary">PEPP</name>
    <name type="ORF">PABG_07230</name>
</gene>
<protein>
    <recommendedName>
        <fullName>Probable Xaa-Pro aminopeptidase PEPP</fullName>
        <ecNumber>3.4.11.9</ecNumber>
    </recommendedName>
    <alternativeName>
        <fullName>Aminoacylproline aminopeptidase</fullName>
    </alternativeName>
    <alternativeName>
        <fullName>Prolidase</fullName>
    </alternativeName>
</protein>
<proteinExistence type="inferred from homology"/>
<organism>
    <name type="scientific">Paracoccidioides brasiliensis (strain Pb03)</name>
    <dbReference type="NCBI Taxonomy" id="482561"/>
    <lineage>
        <taxon>Eukaryota</taxon>
        <taxon>Fungi</taxon>
        <taxon>Dikarya</taxon>
        <taxon>Ascomycota</taxon>
        <taxon>Pezizomycotina</taxon>
        <taxon>Eurotiomycetes</taxon>
        <taxon>Eurotiomycetidae</taxon>
        <taxon>Onygenales</taxon>
        <taxon>Ajellomycetaceae</taxon>
        <taxon>Paracoccidioides</taxon>
    </lineage>
</organism>
<evidence type="ECO:0000250" key="1"/>
<evidence type="ECO:0000305" key="2"/>
<feature type="chain" id="PRO_0000411881" description="Probable Xaa-Pro aminopeptidase PEPP">
    <location>
        <begin position="1"/>
        <end position="468"/>
    </location>
</feature>
<feature type="binding site" evidence="1">
    <location>
        <position position="264"/>
    </location>
    <ligand>
        <name>Mn(2+)</name>
        <dbReference type="ChEBI" id="CHEBI:29035"/>
        <label>2</label>
    </ligand>
</feature>
<feature type="binding site" evidence="1">
    <location>
        <position position="275"/>
    </location>
    <ligand>
        <name>Mn(2+)</name>
        <dbReference type="ChEBI" id="CHEBI:29035"/>
        <label>1</label>
    </ligand>
</feature>
<feature type="binding site" evidence="1">
    <location>
        <position position="275"/>
    </location>
    <ligand>
        <name>Mn(2+)</name>
        <dbReference type="ChEBI" id="CHEBI:29035"/>
        <label>2</label>
    </ligand>
</feature>
<feature type="binding site" evidence="1">
    <location>
        <position position="398"/>
    </location>
    <ligand>
        <name>Mn(2+)</name>
        <dbReference type="ChEBI" id="CHEBI:29035"/>
        <label>1</label>
    </ligand>
</feature>
<feature type="binding site" evidence="1">
    <location>
        <position position="438"/>
    </location>
    <ligand>
        <name>Mn(2+)</name>
        <dbReference type="ChEBI" id="CHEBI:29035"/>
        <label>1</label>
    </ligand>
</feature>
<feature type="binding site" evidence="1">
    <location>
        <position position="438"/>
    </location>
    <ligand>
        <name>Mn(2+)</name>
        <dbReference type="ChEBI" id="CHEBI:29035"/>
        <label>2</label>
    </ligand>
</feature>
<sequence length="468" mass="51886">MAISVDQTPAGKYPAKVHAKRVAARIQELGHGDSGIIYLEGQKTHMIEDSDGEMPFRQRRNFFYLSGCPLPDSYLTYDIKADKLTIFIPPIDPASVIWSGLPLSVEEALEIYDVDAVLSTAEVNASLAHYCSAQGGKKVFAIADQVSPHITFLPFQEIDFDVLKRAVEESRVVKDSYEIALLRRANEISSKAHVAVFKAATSARNERELEAIFVGACMSSGCREQSYHPIFASGTNAATLHYQKNDEDLVDSVTGQRRLNMLIDAGAEYRNYCADITRVVPLSGKFSPESREIYDIVLEMQNSSLAMIKAGVMWEDVHSTSHRVAIRGLLKLGILRSTEDELFEKGISVAFFPHGLGHYLGMDTHDTGGNPNYADKDPKFKYLRLRGPLASGGVVTVEPGIYFCRFIIDPYLSSPDLGKYINADVLERYWSVGGVRIEDNVVVTDSGYDNLTTAPKLPEEIERLATEK</sequence>
<reference key="1">
    <citation type="journal article" date="2011" name="PLoS Genet.">
        <title>Comparative genomic analysis of human fungal pathogens causing paracoccidioidomycosis.</title>
        <authorList>
            <person name="Desjardins C.A."/>
            <person name="Champion M.D."/>
            <person name="Holder J.W."/>
            <person name="Muszewska A."/>
            <person name="Goldberg J."/>
            <person name="Bailao A.M."/>
            <person name="Brigido M.M."/>
            <person name="Ferreira M.E."/>
            <person name="Garcia A.M."/>
            <person name="Grynberg M."/>
            <person name="Gujja S."/>
            <person name="Heiman D.I."/>
            <person name="Henn M.R."/>
            <person name="Kodira C.D."/>
            <person name="Leon-Narvaez H."/>
            <person name="Longo L.V.G."/>
            <person name="Ma L.-J."/>
            <person name="Malavazi I."/>
            <person name="Matsuo A.L."/>
            <person name="Morais F.V."/>
            <person name="Pereira M."/>
            <person name="Rodriguez-Brito S."/>
            <person name="Sakthikumar S."/>
            <person name="Salem-Izacc S.M."/>
            <person name="Sykes S.M."/>
            <person name="Teixeira M.M."/>
            <person name="Vallejo M.C."/>
            <person name="Walter M.E."/>
            <person name="Yandava C."/>
            <person name="Young S."/>
            <person name="Zeng Q."/>
            <person name="Zucker J."/>
            <person name="Felipe M.S."/>
            <person name="Goldman G.H."/>
            <person name="Haas B.J."/>
            <person name="McEwen J.G."/>
            <person name="Nino-Vega G."/>
            <person name="Puccia R."/>
            <person name="San-Blas G."/>
            <person name="Soares C.M."/>
            <person name="Birren B.W."/>
            <person name="Cuomo C.A."/>
        </authorList>
    </citation>
    <scope>NUCLEOTIDE SEQUENCE [LARGE SCALE GENOMIC DNA]</scope>
    <source>
        <strain>Pb03</strain>
    </source>
</reference>
<name>AMPP3_PARBP</name>
<keyword id="KW-0031">Aminopeptidase</keyword>
<keyword id="KW-0378">Hydrolase</keyword>
<keyword id="KW-0464">Manganese</keyword>
<keyword id="KW-0479">Metal-binding</keyword>
<keyword id="KW-0482">Metalloprotease</keyword>
<keyword id="KW-0645">Protease</keyword>